<gene>
    <name type="primary">cit-1.2</name>
    <name type="ORF">F44B9.3</name>
</gene>
<name>CCNT2_CAEEL</name>
<accession>P34424</accession>
<accession>Q8IG20</accession>
<comment type="function">
    <text>Regulatory subunit of the cyclin-dependent kinase pair (CDK9/cyclin T) complex, also called positive transcription elongation factor B (P-TEFb), which is proposed to facilitate the transition from abortive to production elongation by phosphorylating the CTD (carboxy-terminal domain) of the large subunit of RNA polymerase II (RNAP II).</text>
</comment>
<comment type="alternative products">
    <event type="alternative splicing"/>
    <isoform>
        <id>P34424-1</id>
        <name>a</name>
        <sequence type="displayed"/>
    </isoform>
    <isoform>
        <id>P34424-2</id>
        <name>b</name>
        <sequence type="described" ref="VSP_015982"/>
    </isoform>
</comment>
<comment type="similarity">
    <text evidence="2">Belongs to the cyclin family. Cyclin C subfamily.</text>
</comment>
<dbReference type="EMBL" id="FO080400">
    <property type="protein sequence ID" value="CCD63443.1"/>
    <property type="molecule type" value="Genomic_DNA"/>
</dbReference>
<dbReference type="EMBL" id="FO080400">
    <property type="protein sequence ID" value="CCD63444.1"/>
    <property type="molecule type" value="Genomic_DNA"/>
</dbReference>
<dbReference type="PIR" id="S44814">
    <property type="entry name" value="S44814"/>
</dbReference>
<dbReference type="RefSeq" id="NP_001370391.1">
    <molecule id="P34424-2"/>
    <property type="nucleotide sequence ID" value="NM_001382929.1"/>
</dbReference>
<dbReference type="RefSeq" id="NP_498745.1">
    <molecule id="P34424-1"/>
    <property type="nucleotide sequence ID" value="NM_066344.6"/>
</dbReference>
<dbReference type="RefSeq" id="NP_871655.1">
    <property type="nucleotide sequence ID" value="NM_181926.3"/>
</dbReference>
<dbReference type="SMR" id="P34424"/>
<dbReference type="BioGRID" id="41332">
    <property type="interactions" value="2"/>
</dbReference>
<dbReference type="FunCoup" id="P34424">
    <property type="interactions" value="445"/>
</dbReference>
<dbReference type="IntAct" id="P34424">
    <property type="interactions" value="1"/>
</dbReference>
<dbReference type="STRING" id="6239.F44B9.3a.1"/>
<dbReference type="PaxDb" id="6239-F44B9.3a"/>
<dbReference type="PeptideAtlas" id="P34424"/>
<dbReference type="EnsemblMetazoa" id="F44B9.3a.1">
    <molecule id="P34424-1"/>
    <property type="protein sequence ID" value="F44B9.3a.1"/>
    <property type="gene ID" value="WBGene00000508"/>
</dbReference>
<dbReference type="EnsemblMetazoa" id="F44B9.3b.1">
    <molecule id="P34424-2"/>
    <property type="protein sequence ID" value="F44B9.3b.1"/>
    <property type="gene ID" value="WBGene00000508"/>
</dbReference>
<dbReference type="EnsemblMetazoa" id="F44B9.3b.2">
    <molecule id="P34424-2"/>
    <property type="protein sequence ID" value="F44B9.3b.2"/>
    <property type="gene ID" value="WBGene00000508"/>
</dbReference>
<dbReference type="GeneID" id="176126"/>
<dbReference type="KEGG" id="cel:CELE_F44B9.3"/>
<dbReference type="UCSC" id="F44B9.3b">
    <molecule id="P34424-1"/>
    <property type="organism name" value="c. elegans"/>
</dbReference>
<dbReference type="AGR" id="WB:WBGene00000508"/>
<dbReference type="CTD" id="176126"/>
<dbReference type="WormBase" id="F44B9.3a">
    <molecule id="P34424-1"/>
    <property type="protein sequence ID" value="CE29042"/>
    <property type="gene ID" value="WBGene00000508"/>
    <property type="gene designation" value="cit-1.2"/>
</dbReference>
<dbReference type="WormBase" id="F44B9.3b">
    <molecule id="P34424-2"/>
    <property type="protein sequence ID" value="CE32417"/>
    <property type="gene ID" value="WBGene00000508"/>
    <property type="gene designation" value="cit-1.2"/>
</dbReference>
<dbReference type="eggNOG" id="KOG0834">
    <property type="taxonomic scope" value="Eukaryota"/>
</dbReference>
<dbReference type="GeneTree" id="ENSGT00970000196489"/>
<dbReference type="HOGENOM" id="CLU_036123_0_0_1"/>
<dbReference type="InParanoid" id="P34424"/>
<dbReference type="OMA" id="TAYYMAT"/>
<dbReference type="OrthoDB" id="25002at2759"/>
<dbReference type="Reactome" id="R-CEL-112382">
    <property type="pathway name" value="Formation of RNA Pol II elongation complex"/>
</dbReference>
<dbReference type="Reactome" id="R-CEL-2173796">
    <property type="pathway name" value="SMAD2/SMAD3:SMAD4 heterotrimer regulates transcription"/>
</dbReference>
<dbReference type="Reactome" id="R-CEL-674695">
    <property type="pathway name" value="RNA Polymerase II Pre-transcription Events"/>
</dbReference>
<dbReference type="Reactome" id="R-CEL-6796648">
    <property type="pathway name" value="TP53 Regulates Transcription of DNA Repair Genes"/>
</dbReference>
<dbReference type="Reactome" id="R-CEL-6807505">
    <property type="pathway name" value="RNA polymerase II transcribes snRNA genes"/>
</dbReference>
<dbReference type="Reactome" id="R-CEL-75955">
    <property type="pathway name" value="RNA Polymerase II Transcription Elongation"/>
</dbReference>
<dbReference type="Reactome" id="R-CEL-9018519">
    <property type="pathway name" value="Estrogen-dependent gene expression"/>
</dbReference>
<dbReference type="SignaLink" id="P34424"/>
<dbReference type="PRO" id="PR:P34424"/>
<dbReference type="Proteomes" id="UP000001940">
    <property type="component" value="Chromosome III"/>
</dbReference>
<dbReference type="Bgee" id="WBGene00000508">
    <property type="expression patterns" value="Expressed in pharyngeal muscle cell (C elegans) and 4 other cell types or tissues"/>
</dbReference>
<dbReference type="GO" id="GO:0008024">
    <property type="term" value="C:cyclin/CDK positive transcription elongation factor complex"/>
    <property type="evidence" value="ECO:0000318"/>
    <property type="project" value="GO_Central"/>
</dbReference>
<dbReference type="GO" id="GO:0005634">
    <property type="term" value="C:nucleus"/>
    <property type="evidence" value="ECO:0000314"/>
    <property type="project" value="UniProtKB"/>
</dbReference>
<dbReference type="GO" id="GO:0061575">
    <property type="term" value="F:cyclin-dependent protein serine/threonine kinase activator activity"/>
    <property type="evidence" value="ECO:0000315"/>
    <property type="project" value="UniProtKB"/>
</dbReference>
<dbReference type="GO" id="GO:0009792">
    <property type="term" value="P:embryo development ending in birth or egg hatching"/>
    <property type="evidence" value="ECO:0000315"/>
    <property type="project" value="UniProtKB"/>
</dbReference>
<dbReference type="GO" id="GO:0032786">
    <property type="term" value="P:positive regulation of DNA-templated transcription, elongation"/>
    <property type="evidence" value="ECO:0000318"/>
    <property type="project" value="GO_Central"/>
</dbReference>
<dbReference type="GO" id="GO:0045944">
    <property type="term" value="P:positive regulation of transcription by RNA polymerase II"/>
    <property type="evidence" value="ECO:0000318"/>
    <property type="project" value="GO_Central"/>
</dbReference>
<dbReference type="CDD" id="cd20539">
    <property type="entry name" value="CYCLIN_CCNT_rpt2"/>
    <property type="match status" value="1"/>
</dbReference>
<dbReference type="FunFam" id="1.10.472.10:FF:000254">
    <property type="entry name" value="Cyclin-T1.2"/>
    <property type="match status" value="1"/>
</dbReference>
<dbReference type="FunFam" id="1.10.472.10:FF:000181">
    <property type="entry name" value="Protein CBR-CIT-1.1"/>
    <property type="match status" value="1"/>
</dbReference>
<dbReference type="Gene3D" id="1.10.472.10">
    <property type="entry name" value="Cyclin-like"/>
    <property type="match status" value="2"/>
</dbReference>
<dbReference type="InterPro" id="IPR013763">
    <property type="entry name" value="Cyclin-like_dom"/>
</dbReference>
<dbReference type="InterPro" id="IPR036915">
    <property type="entry name" value="Cyclin-like_sf"/>
</dbReference>
<dbReference type="InterPro" id="IPR043198">
    <property type="entry name" value="Cyclin/Ssn8"/>
</dbReference>
<dbReference type="InterPro" id="IPR006671">
    <property type="entry name" value="Cyclin_N"/>
</dbReference>
<dbReference type="PANTHER" id="PTHR10026">
    <property type="entry name" value="CYCLIN"/>
    <property type="match status" value="1"/>
</dbReference>
<dbReference type="Pfam" id="PF00134">
    <property type="entry name" value="Cyclin_N"/>
    <property type="match status" value="1"/>
</dbReference>
<dbReference type="Pfam" id="PF21797">
    <property type="entry name" value="CycT2-like_C"/>
    <property type="match status" value="1"/>
</dbReference>
<dbReference type="SMART" id="SM00385">
    <property type="entry name" value="CYCLIN"/>
    <property type="match status" value="2"/>
</dbReference>
<dbReference type="SUPFAM" id="SSF47954">
    <property type="entry name" value="Cyclin-like"/>
    <property type="match status" value="2"/>
</dbReference>
<proteinExistence type="inferred from homology"/>
<sequence length="555" mass="63023">MSNSNKLIAEKNGSRYGRMIHPWLRKKQDMLADTPSRREGMTYEEELSKRQQGGVFIFDIAMQLTHGKGEHGLSGVAATLFNRFFNVHSLKRCDFRDVAAACVFLAGKNEDAPKKLKYVVTQLWQFKYPHNKQFQSEQHFLDQCNVVTLIEDVLLKTISFDINVDLPHQYVLKLMRDVEKGRNVYKDMVKTAYYMATDVLIITDWSVRYSCASIATACVNIAAFFHNINMDDIVPFELSDRWYRLEDQSMTREEVEAMTKEFLDIFSRNPQFHIGSLKKIDPLGKVKIVGMPPQVSSTVTPSGSSSNLKKIDLESYKGRPKPLSNSSDSPSTRPSFLPDVKNQKVVEQELMEQRMKEAAQQKIHRNGHRPSSSSHPLHHHSTSSSASNNSNHQNRSSSGLSAHQHQKPYNEDSRSAKRSMMYEETNSSKKPRIDYKMSFVASSSTTIATMHNDHFSQTTHQQNISTYARGVNEMMLNQVAPPPLMSVSAQPSTYQKMCMEYQRNPADSRHTMSSTQQISPPDEPSPPVSQILLPPPPPPPILPPRLDEMEEGELV</sequence>
<organism>
    <name type="scientific">Caenorhabditis elegans</name>
    <dbReference type="NCBI Taxonomy" id="6239"/>
    <lineage>
        <taxon>Eukaryota</taxon>
        <taxon>Metazoa</taxon>
        <taxon>Ecdysozoa</taxon>
        <taxon>Nematoda</taxon>
        <taxon>Chromadorea</taxon>
        <taxon>Rhabditida</taxon>
        <taxon>Rhabditina</taxon>
        <taxon>Rhabditomorpha</taxon>
        <taxon>Rhabditoidea</taxon>
        <taxon>Rhabditidae</taxon>
        <taxon>Peloderinae</taxon>
        <taxon>Caenorhabditis</taxon>
    </lineage>
</organism>
<reference key="1">
    <citation type="journal article" date="1994" name="Nature">
        <title>2.2 Mb of contiguous nucleotide sequence from chromosome III of C. elegans.</title>
        <authorList>
            <person name="Wilson R."/>
            <person name="Ainscough R."/>
            <person name="Anderson K."/>
            <person name="Baynes C."/>
            <person name="Berks M."/>
            <person name="Bonfield J."/>
            <person name="Burton J."/>
            <person name="Connell M."/>
            <person name="Copsey T."/>
            <person name="Cooper J."/>
            <person name="Coulson A."/>
            <person name="Craxton M."/>
            <person name="Dear S."/>
            <person name="Du Z."/>
            <person name="Durbin R."/>
            <person name="Favello A."/>
            <person name="Fraser A."/>
            <person name="Fulton L."/>
            <person name="Gardner A."/>
            <person name="Green P."/>
            <person name="Hawkins T."/>
            <person name="Hillier L."/>
            <person name="Jier M."/>
            <person name="Johnston L."/>
            <person name="Jones M."/>
            <person name="Kershaw J."/>
            <person name="Kirsten J."/>
            <person name="Laisster N."/>
            <person name="Latreille P."/>
            <person name="Lightning J."/>
            <person name="Lloyd C."/>
            <person name="Mortimore B."/>
            <person name="O'Callaghan M."/>
            <person name="Parsons J."/>
            <person name="Percy C."/>
            <person name="Rifken L."/>
            <person name="Roopra A."/>
            <person name="Saunders D."/>
            <person name="Shownkeen R."/>
            <person name="Sims M."/>
            <person name="Smaldon N."/>
            <person name="Smith A."/>
            <person name="Smith M."/>
            <person name="Sonnhammer E."/>
            <person name="Staden R."/>
            <person name="Sulston J."/>
            <person name="Thierry-Mieg J."/>
            <person name="Thomas K."/>
            <person name="Vaudin M."/>
            <person name="Vaughan K."/>
            <person name="Waterston R."/>
            <person name="Watson A."/>
            <person name="Weinstock L."/>
            <person name="Wilkinson-Sproat J."/>
            <person name="Wohldman P."/>
        </authorList>
    </citation>
    <scope>NUCLEOTIDE SEQUENCE [LARGE SCALE GENOMIC DNA]</scope>
    <source>
        <strain>Bristol N2</strain>
    </source>
</reference>
<reference key="2">
    <citation type="journal article" date="1998" name="Science">
        <title>Genome sequence of the nematode C. elegans: a platform for investigating biology.</title>
        <authorList>
            <consortium name="The C. elegans sequencing consortium"/>
        </authorList>
    </citation>
    <scope>NUCLEOTIDE SEQUENCE [LARGE SCALE GENOMIC DNA]</scope>
    <scope>ALTERNATIVE SPLICING</scope>
    <source>
        <strain>Bristol N2</strain>
    </source>
</reference>
<feature type="chain" id="PRO_0000080497" description="Cyclin-T1.2">
    <location>
        <begin position="1"/>
        <end position="555"/>
    </location>
</feature>
<feature type="region of interest" description="Disordered" evidence="1">
    <location>
        <begin position="315"/>
        <end position="429"/>
    </location>
</feature>
<feature type="region of interest" description="Disordered" evidence="1">
    <location>
        <begin position="505"/>
        <end position="555"/>
    </location>
</feature>
<feature type="compositionally biased region" description="Low complexity" evidence="1">
    <location>
        <begin position="321"/>
        <end position="335"/>
    </location>
</feature>
<feature type="compositionally biased region" description="Basic and acidic residues" evidence="1">
    <location>
        <begin position="341"/>
        <end position="359"/>
    </location>
</feature>
<feature type="compositionally biased region" description="Low complexity" evidence="1">
    <location>
        <begin position="382"/>
        <end position="398"/>
    </location>
</feature>
<feature type="compositionally biased region" description="Pro residues" evidence="1">
    <location>
        <begin position="521"/>
        <end position="543"/>
    </location>
</feature>
<feature type="splice variant" id="VSP_015982" description="In isoform b." evidence="2">
    <location>
        <begin position="1"/>
        <end position="174"/>
    </location>
</feature>
<evidence type="ECO:0000256" key="1">
    <source>
        <dbReference type="SAM" id="MobiDB-lite"/>
    </source>
</evidence>
<evidence type="ECO:0000305" key="2"/>
<keyword id="KW-0025">Alternative splicing</keyword>
<keyword id="KW-0195">Cyclin</keyword>
<keyword id="KW-1185">Reference proteome</keyword>
<keyword id="KW-0804">Transcription</keyword>
<keyword id="KW-0805">Transcription regulation</keyword>
<protein>
    <recommendedName>
        <fullName>Cyclin-T1.2</fullName>
    </recommendedName>
</protein>